<evidence type="ECO:0000255" key="1">
    <source>
        <dbReference type="HAMAP-Rule" id="MF_01554"/>
    </source>
</evidence>
<protein>
    <recommendedName>
        <fullName evidence="1">Phosphoglucosamine mutase</fullName>
        <ecNumber evidence="1">5.4.2.10</ecNumber>
    </recommendedName>
</protein>
<name>GLMM_SOLM1</name>
<reference key="1">
    <citation type="journal article" date="2009" name="Genome Res.">
        <title>Whole genome sequence of Desulfovibrio magneticus strain RS-1 revealed common gene clusters in magnetotactic bacteria.</title>
        <authorList>
            <person name="Nakazawa H."/>
            <person name="Arakaki A."/>
            <person name="Narita-Yamada S."/>
            <person name="Yashiro I."/>
            <person name="Jinno K."/>
            <person name="Aoki N."/>
            <person name="Tsuruyama A."/>
            <person name="Okamura Y."/>
            <person name="Tanikawa S."/>
            <person name="Fujita N."/>
            <person name="Takeyama H."/>
            <person name="Matsunaga T."/>
        </authorList>
    </citation>
    <scope>NUCLEOTIDE SEQUENCE [LARGE SCALE GENOMIC DNA]</scope>
    <source>
        <strain>ATCC 700980 / DSM 13731 / RS-1</strain>
    </source>
</reference>
<dbReference type="EC" id="5.4.2.10" evidence="1"/>
<dbReference type="EMBL" id="AP010904">
    <property type="protein sequence ID" value="BAH76061.1"/>
    <property type="molecule type" value="Genomic_DNA"/>
</dbReference>
<dbReference type="RefSeq" id="WP_015861238.1">
    <property type="nucleotide sequence ID" value="NC_012796.1"/>
</dbReference>
<dbReference type="SMR" id="C4XU39"/>
<dbReference type="STRING" id="573370.DMR_25700"/>
<dbReference type="KEGG" id="dma:DMR_25700"/>
<dbReference type="eggNOG" id="COG1109">
    <property type="taxonomic scope" value="Bacteria"/>
</dbReference>
<dbReference type="HOGENOM" id="CLU_016950_7_0_7"/>
<dbReference type="OrthoDB" id="9806956at2"/>
<dbReference type="Proteomes" id="UP000009071">
    <property type="component" value="Chromosome"/>
</dbReference>
<dbReference type="GO" id="GO:0005829">
    <property type="term" value="C:cytosol"/>
    <property type="evidence" value="ECO:0007669"/>
    <property type="project" value="TreeGrafter"/>
</dbReference>
<dbReference type="GO" id="GO:0000287">
    <property type="term" value="F:magnesium ion binding"/>
    <property type="evidence" value="ECO:0007669"/>
    <property type="project" value="UniProtKB-UniRule"/>
</dbReference>
<dbReference type="GO" id="GO:0008966">
    <property type="term" value="F:phosphoglucosamine mutase activity"/>
    <property type="evidence" value="ECO:0007669"/>
    <property type="project" value="UniProtKB-UniRule"/>
</dbReference>
<dbReference type="GO" id="GO:0004615">
    <property type="term" value="F:phosphomannomutase activity"/>
    <property type="evidence" value="ECO:0007669"/>
    <property type="project" value="TreeGrafter"/>
</dbReference>
<dbReference type="GO" id="GO:0005975">
    <property type="term" value="P:carbohydrate metabolic process"/>
    <property type="evidence" value="ECO:0007669"/>
    <property type="project" value="InterPro"/>
</dbReference>
<dbReference type="GO" id="GO:0009252">
    <property type="term" value="P:peptidoglycan biosynthetic process"/>
    <property type="evidence" value="ECO:0007669"/>
    <property type="project" value="TreeGrafter"/>
</dbReference>
<dbReference type="GO" id="GO:0006048">
    <property type="term" value="P:UDP-N-acetylglucosamine biosynthetic process"/>
    <property type="evidence" value="ECO:0007669"/>
    <property type="project" value="TreeGrafter"/>
</dbReference>
<dbReference type="CDD" id="cd05802">
    <property type="entry name" value="GlmM"/>
    <property type="match status" value="1"/>
</dbReference>
<dbReference type="FunFam" id="3.30.310.50:FF:000001">
    <property type="entry name" value="Phosphoglucosamine mutase"/>
    <property type="match status" value="1"/>
</dbReference>
<dbReference type="FunFam" id="3.40.120.10:FF:000001">
    <property type="entry name" value="Phosphoglucosamine mutase"/>
    <property type="match status" value="1"/>
</dbReference>
<dbReference type="FunFam" id="3.40.120.10:FF:000002">
    <property type="entry name" value="Phosphoglucosamine mutase"/>
    <property type="match status" value="1"/>
</dbReference>
<dbReference type="Gene3D" id="3.40.120.10">
    <property type="entry name" value="Alpha-D-Glucose-1,6-Bisphosphate, subunit A, domain 3"/>
    <property type="match status" value="3"/>
</dbReference>
<dbReference type="Gene3D" id="3.30.310.50">
    <property type="entry name" value="Alpha-D-phosphohexomutase, C-terminal domain"/>
    <property type="match status" value="1"/>
</dbReference>
<dbReference type="HAMAP" id="MF_01554_B">
    <property type="entry name" value="GlmM_B"/>
    <property type="match status" value="1"/>
</dbReference>
<dbReference type="InterPro" id="IPR005844">
    <property type="entry name" value="A-D-PHexomutase_a/b/a-I"/>
</dbReference>
<dbReference type="InterPro" id="IPR016055">
    <property type="entry name" value="A-D-PHexomutase_a/b/a-I/II/III"/>
</dbReference>
<dbReference type="InterPro" id="IPR005845">
    <property type="entry name" value="A-D-PHexomutase_a/b/a-II"/>
</dbReference>
<dbReference type="InterPro" id="IPR005846">
    <property type="entry name" value="A-D-PHexomutase_a/b/a-III"/>
</dbReference>
<dbReference type="InterPro" id="IPR005843">
    <property type="entry name" value="A-D-PHexomutase_C"/>
</dbReference>
<dbReference type="InterPro" id="IPR036900">
    <property type="entry name" value="A-D-PHexomutase_C_sf"/>
</dbReference>
<dbReference type="InterPro" id="IPR016066">
    <property type="entry name" value="A-D-PHexomutase_CS"/>
</dbReference>
<dbReference type="InterPro" id="IPR005841">
    <property type="entry name" value="Alpha-D-phosphohexomutase_SF"/>
</dbReference>
<dbReference type="InterPro" id="IPR006352">
    <property type="entry name" value="GlmM_bact"/>
</dbReference>
<dbReference type="InterPro" id="IPR050060">
    <property type="entry name" value="Phosphoglucosamine_mutase"/>
</dbReference>
<dbReference type="NCBIfam" id="TIGR01455">
    <property type="entry name" value="glmM"/>
    <property type="match status" value="1"/>
</dbReference>
<dbReference type="NCBIfam" id="NF008139">
    <property type="entry name" value="PRK10887.1"/>
    <property type="match status" value="1"/>
</dbReference>
<dbReference type="PANTHER" id="PTHR42946:SF1">
    <property type="entry name" value="PHOSPHOGLUCOMUTASE (ALPHA-D-GLUCOSE-1,6-BISPHOSPHATE-DEPENDENT)"/>
    <property type="match status" value="1"/>
</dbReference>
<dbReference type="PANTHER" id="PTHR42946">
    <property type="entry name" value="PHOSPHOHEXOSE MUTASE"/>
    <property type="match status" value="1"/>
</dbReference>
<dbReference type="Pfam" id="PF02878">
    <property type="entry name" value="PGM_PMM_I"/>
    <property type="match status" value="1"/>
</dbReference>
<dbReference type="Pfam" id="PF02879">
    <property type="entry name" value="PGM_PMM_II"/>
    <property type="match status" value="1"/>
</dbReference>
<dbReference type="Pfam" id="PF02880">
    <property type="entry name" value="PGM_PMM_III"/>
    <property type="match status" value="1"/>
</dbReference>
<dbReference type="Pfam" id="PF00408">
    <property type="entry name" value="PGM_PMM_IV"/>
    <property type="match status" value="1"/>
</dbReference>
<dbReference type="PRINTS" id="PR00509">
    <property type="entry name" value="PGMPMM"/>
</dbReference>
<dbReference type="SUPFAM" id="SSF55957">
    <property type="entry name" value="Phosphoglucomutase, C-terminal domain"/>
    <property type="match status" value="1"/>
</dbReference>
<dbReference type="SUPFAM" id="SSF53738">
    <property type="entry name" value="Phosphoglucomutase, first 3 domains"/>
    <property type="match status" value="3"/>
</dbReference>
<dbReference type="PROSITE" id="PS00710">
    <property type="entry name" value="PGM_PMM"/>
    <property type="match status" value="1"/>
</dbReference>
<organism>
    <name type="scientific">Solidesulfovibrio magneticus (strain ATCC 700980 / DSM 13731 / RS-1)</name>
    <name type="common">Desulfovibrio magneticus</name>
    <dbReference type="NCBI Taxonomy" id="573370"/>
    <lineage>
        <taxon>Bacteria</taxon>
        <taxon>Pseudomonadati</taxon>
        <taxon>Thermodesulfobacteriota</taxon>
        <taxon>Desulfovibrionia</taxon>
        <taxon>Desulfovibrionales</taxon>
        <taxon>Desulfovibrionaceae</taxon>
        <taxon>Solidesulfovibrio</taxon>
    </lineage>
</organism>
<feature type="chain" id="PRO_1000215487" description="Phosphoglucosamine mutase">
    <location>
        <begin position="1"/>
        <end position="450"/>
    </location>
</feature>
<feature type="active site" description="Phosphoserine intermediate" evidence="1">
    <location>
        <position position="102"/>
    </location>
</feature>
<feature type="binding site" description="via phosphate group" evidence="1">
    <location>
        <position position="102"/>
    </location>
    <ligand>
        <name>Mg(2+)</name>
        <dbReference type="ChEBI" id="CHEBI:18420"/>
    </ligand>
</feature>
<feature type="binding site" evidence="1">
    <location>
        <position position="244"/>
    </location>
    <ligand>
        <name>Mg(2+)</name>
        <dbReference type="ChEBI" id="CHEBI:18420"/>
    </ligand>
</feature>
<feature type="binding site" evidence="1">
    <location>
        <position position="246"/>
    </location>
    <ligand>
        <name>Mg(2+)</name>
        <dbReference type="ChEBI" id="CHEBI:18420"/>
    </ligand>
</feature>
<feature type="binding site" evidence="1">
    <location>
        <position position="248"/>
    </location>
    <ligand>
        <name>Mg(2+)</name>
        <dbReference type="ChEBI" id="CHEBI:18420"/>
    </ligand>
</feature>
<feature type="modified residue" description="Phosphoserine" evidence="1">
    <location>
        <position position="102"/>
    </location>
</feature>
<gene>
    <name evidence="1" type="primary">glmM</name>
    <name type="ordered locus">DMR_25700</name>
</gene>
<sequence length="450" mass="48501">MDNKLFGTDGLRGRVNAYPMTPDVVMRLALSAGLHFRNGSRRHKVLIGKDTRRSGYIYEYALSSGFCAAGMDVFLTGPLPTPAISFLTRDMRADVGVVISASHNPACDNGIKFFDHMGFKLPDAVEAEIAARVEGYAQDWRLPDPDHVGRAFKLEDSPGRYNVFLKNSIPLDVNFEGLKIVLDCAHGAAYRVTPQVFEELGAKVIKIGVDPDGSNINQRVGSLFPQQVARMVAEAEADIGIALDGDADRVIVADEKGRILDGDQIMAICALDLMERGALPGNLLVATVMSNMALEVFMKDHGGRLLRTPVGDRYVVEAMRAQGAVFGGEQSGHLIFLNHSTTGDGTLAALQLMKIMVRKGKPLSELATLLSPFPQKLVNVPVARKIPFSEAPAIEAAVKDAEATLSGRGRVLLRYSGTESLARVMVEAQDAALVESLCDSLAEVVARALA</sequence>
<accession>C4XU39</accession>
<comment type="function">
    <text evidence="1">Catalyzes the conversion of glucosamine-6-phosphate to glucosamine-1-phosphate.</text>
</comment>
<comment type="catalytic activity">
    <reaction evidence="1">
        <text>alpha-D-glucosamine 1-phosphate = D-glucosamine 6-phosphate</text>
        <dbReference type="Rhea" id="RHEA:23424"/>
        <dbReference type="ChEBI" id="CHEBI:58516"/>
        <dbReference type="ChEBI" id="CHEBI:58725"/>
        <dbReference type="EC" id="5.4.2.10"/>
    </reaction>
</comment>
<comment type="cofactor">
    <cofactor evidence="1">
        <name>Mg(2+)</name>
        <dbReference type="ChEBI" id="CHEBI:18420"/>
    </cofactor>
    <text evidence="1">Binds 1 Mg(2+) ion per subunit.</text>
</comment>
<comment type="PTM">
    <text evidence="1">Activated by phosphorylation.</text>
</comment>
<comment type="similarity">
    <text evidence="1">Belongs to the phosphohexose mutase family.</text>
</comment>
<proteinExistence type="inferred from homology"/>
<keyword id="KW-0413">Isomerase</keyword>
<keyword id="KW-0460">Magnesium</keyword>
<keyword id="KW-0479">Metal-binding</keyword>
<keyword id="KW-0597">Phosphoprotein</keyword>